<accession>A5HYZ4</accession>
<accession>A7G0Z0</accession>
<gene>
    <name evidence="1" type="primary">thiM1</name>
    <name type="ordered locus">CBO0450</name>
    <name type="ordered locus">CLC_0524</name>
</gene>
<keyword id="KW-0067">ATP-binding</keyword>
<keyword id="KW-0418">Kinase</keyword>
<keyword id="KW-0460">Magnesium</keyword>
<keyword id="KW-0479">Metal-binding</keyword>
<keyword id="KW-0547">Nucleotide-binding</keyword>
<keyword id="KW-1185">Reference proteome</keyword>
<keyword id="KW-0784">Thiamine biosynthesis</keyword>
<keyword id="KW-0808">Transferase</keyword>
<name>THIM1_CLOBH</name>
<comment type="function">
    <text evidence="1">Catalyzes the phosphorylation of the hydroxyl group of 4-methyl-5-beta-hydroxyethylthiazole (THZ).</text>
</comment>
<comment type="catalytic activity">
    <reaction evidence="1">
        <text>5-(2-hydroxyethyl)-4-methylthiazole + ATP = 4-methyl-5-(2-phosphooxyethyl)-thiazole + ADP + H(+)</text>
        <dbReference type="Rhea" id="RHEA:24212"/>
        <dbReference type="ChEBI" id="CHEBI:15378"/>
        <dbReference type="ChEBI" id="CHEBI:17957"/>
        <dbReference type="ChEBI" id="CHEBI:30616"/>
        <dbReference type="ChEBI" id="CHEBI:58296"/>
        <dbReference type="ChEBI" id="CHEBI:456216"/>
        <dbReference type="EC" id="2.7.1.50"/>
    </reaction>
</comment>
<comment type="cofactor">
    <cofactor evidence="1">
        <name>Mg(2+)</name>
        <dbReference type="ChEBI" id="CHEBI:18420"/>
    </cofactor>
</comment>
<comment type="pathway">
    <text evidence="1">Cofactor biosynthesis; thiamine diphosphate biosynthesis; 4-methyl-5-(2-phosphoethyl)-thiazole from 5-(2-hydroxyethyl)-4-methylthiazole: step 1/1.</text>
</comment>
<comment type="similarity">
    <text evidence="1">Belongs to the Thz kinase family.</text>
</comment>
<proteinExistence type="inferred from homology"/>
<reference key="1">
    <citation type="journal article" date="2007" name="Genome Res.">
        <title>Genome sequence of a proteolytic (Group I) Clostridium botulinum strain Hall A and comparative analysis of the clostridial genomes.</title>
        <authorList>
            <person name="Sebaihia M."/>
            <person name="Peck M.W."/>
            <person name="Minton N.P."/>
            <person name="Thomson N.R."/>
            <person name="Holden M.T.G."/>
            <person name="Mitchell W.J."/>
            <person name="Carter A.T."/>
            <person name="Bentley S.D."/>
            <person name="Mason D.R."/>
            <person name="Crossman L."/>
            <person name="Paul C.J."/>
            <person name="Ivens A."/>
            <person name="Wells-Bennik M.H.J."/>
            <person name="Davis I.J."/>
            <person name="Cerdeno-Tarraga A.M."/>
            <person name="Churcher C."/>
            <person name="Quail M.A."/>
            <person name="Chillingworth T."/>
            <person name="Feltwell T."/>
            <person name="Fraser A."/>
            <person name="Goodhead I."/>
            <person name="Hance Z."/>
            <person name="Jagels K."/>
            <person name="Larke N."/>
            <person name="Maddison M."/>
            <person name="Moule S."/>
            <person name="Mungall K."/>
            <person name="Norbertczak H."/>
            <person name="Rabbinowitsch E."/>
            <person name="Sanders M."/>
            <person name="Simmonds M."/>
            <person name="White B."/>
            <person name="Whithead S."/>
            <person name="Parkhill J."/>
        </authorList>
    </citation>
    <scope>NUCLEOTIDE SEQUENCE [LARGE SCALE GENOMIC DNA]</scope>
    <source>
        <strain>Hall / ATCC 3502 / NCTC 13319 / Type A</strain>
    </source>
</reference>
<reference key="2">
    <citation type="journal article" date="2007" name="PLoS ONE">
        <title>Analysis of the neurotoxin complex genes in Clostridium botulinum A1-A4 and B1 strains: BoNT/A3, /Ba4 and /B1 clusters are located within plasmids.</title>
        <authorList>
            <person name="Smith T.J."/>
            <person name="Hill K.K."/>
            <person name="Foley B.T."/>
            <person name="Detter J.C."/>
            <person name="Munk A.C."/>
            <person name="Bruce D.C."/>
            <person name="Doggett N.A."/>
            <person name="Smith L.A."/>
            <person name="Marks J.D."/>
            <person name="Xie G."/>
            <person name="Brettin T.S."/>
        </authorList>
    </citation>
    <scope>NUCLEOTIDE SEQUENCE [LARGE SCALE GENOMIC DNA]</scope>
    <source>
        <strain>Hall / ATCC 3502 / NCTC 13319 / Type A</strain>
    </source>
</reference>
<protein>
    <recommendedName>
        <fullName evidence="1">Hydroxyethylthiazole kinase 1</fullName>
        <ecNumber evidence="1">2.7.1.50</ecNumber>
    </recommendedName>
    <alternativeName>
        <fullName evidence="1">4-methyl-5-beta-hydroxyethylthiazole kinase 1</fullName>
        <shortName evidence="1">TH kinase 1</shortName>
        <shortName evidence="1">Thz kinase 1</shortName>
    </alternativeName>
</protein>
<dbReference type="EC" id="2.7.1.50" evidence="1"/>
<dbReference type="EMBL" id="CP000727">
    <property type="protein sequence ID" value="ABS39081.1"/>
    <property type="molecule type" value="Genomic_DNA"/>
</dbReference>
<dbReference type="EMBL" id="AM412317">
    <property type="protein sequence ID" value="CAL82003.1"/>
    <property type="molecule type" value="Genomic_DNA"/>
</dbReference>
<dbReference type="RefSeq" id="YP_001252994.1">
    <property type="nucleotide sequence ID" value="NC_009495.1"/>
</dbReference>
<dbReference type="RefSeq" id="YP_001386409.1">
    <property type="nucleotide sequence ID" value="NC_009698.1"/>
</dbReference>
<dbReference type="SMR" id="A5HYZ4"/>
<dbReference type="GeneID" id="5184705"/>
<dbReference type="KEGG" id="cbh:CLC_0524"/>
<dbReference type="KEGG" id="cbo:CBO0450"/>
<dbReference type="PATRIC" id="fig|413999.7.peg.453"/>
<dbReference type="HOGENOM" id="CLU_019943_0_0_9"/>
<dbReference type="UniPathway" id="UPA00060">
    <property type="reaction ID" value="UER00139"/>
</dbReference>
<dbReference type="PRO" id="PR:A5HYZ4"/>
<dbReference type="Proteomes" id="UP000001986">
    <property type="component" value="Chromosome"/>
</dbReference>
<dbReference type="GO" id="GO:0005524">
    <property type="term" value="F:ATP binding"/>
    <property type="evidence" value="ECO:0007669"/>
    <property type="project" value="UniProtKB-UniRule"/>
</dbReference>
<dbReference type="GO" id="GO:0004417">
    <property type="term" value="F:hydroxyethylthiazole kinase activity"/>
    <property type="evidence" value="ECO:0007669"/>
    <property type="project" value="UniProtKB-UniRule"/>
</dbReference>
<dbReference type="GO" id="GO:0000287">
    <property type="term" value="F:magnesium ion binding"/>
    <property type="evidence" value="ECO:0007669"/>
    <property type="project" value="UniProtKB-UniRule"/>
</dbReference>
<dbReference type="GO" id="GO:0009228">
    <property type="term" value="P:thiamine biosynthetic process"/>
    <property type="evidence" value="ECO:0007669"/>
    <property type="project" value="UniProtKB-KW"/>
</dbReference>
<dbReference type="GO" id="GO:0009229">
    <property type="term" value="P:thiamine diphosphate biosynthetic process"/>
    <property type="evidence" value="ECO:0007669"/>
    <property type="project" value="UniProtKB-UniRule"/>
</dbReference>
<dbReference type="CDD" id="cd01170">
    <property type="entry name" value="THZ_kinase"/>
    <property type="match status" value="1"/>
</dbReference>
<dbReference type="Gene3D" id="3.40.1190.20">
    <property type="match status" value="1"/>
</dbReference>
<dbReference type="HAMAP" id="MF_00228">
    <property type="entry name" value="Thz_kinase"/>
    <property type="match status" value="1"/>
</dbReference>
<dbReference type="InterPro" id="IPR000417">
    <property type="entry name" value="Hyethyz_kinase"/>
</dbReference>
<dbReference type="InterPro" id="IPR029056">
    <property type="entry name" value="Ribokinase-like"/>
</dbReference>
<dbReference type="NCBIfam" id="NF006830">
    <property type="entry name" value="PRK09355.1"/>
    <property type="match status" value="1"/>
</dbReference>
<dbReference type="NCBIfam" id="TIGR00694">
    <property type="entry name" value="thiM"/>
    <property type="match status" value="1"/>
</dbReference>
<dbReference type="Pfam" id="PF02110">
    <property type="entry name" value="HK"/>
    <property type="match status" value="1"/>
</dbReference>
<dbReference type="PIRSF" id="PIRSF000513">
    <property type="entry name" value="Thz_kinase"/>
    <property type="match status" value="1"/>
</dbReference>
<dbReference type="PRINTS" id="PR01099">
    <property type="entry name" value="HYETHTZKNASE"/>
</dbReference>
<dbReference type="SUPFAM" id="SSF53613">
    <property type="entry name" value="Ribokinase-like"/>
    <property type="match status" value="1"/>
</dbReference>
<evidence type="ECO:0000255" key="1">
    <source>
        <dbReference type="HAMAP-Rule" id="MF_00228"/>
    </source>
</evidence>
<organism>
    <name type="scientific">Clostridium botulinum (strain Hall / ATCC 3502 / NCTC 13319 / Type A)</name>
    <dbReference type="NCBI Taxonomy" id="441771"/>
    <lineage>
        <taxon>Bacteria</taxon>
        <taxon>Bacillati</taxon>
        <taxon>Bacillota</taxon>
        <taxon>Clostridia</taxon>
        <taxon>Eubacteriales</taxon>
        <taxon>Clostridiaceae</taxon>
        <taxon>Clostridium</taxon>
    </lineage>
</organism>
<feature type="chain" id="PRO_0000336548" description="Hydroxyethylthiazole kinase 1">
    <location>
        <begin position="1"/>
        <end position="263"/>
    </location>
</feature>
<feature type="binding site" evidence="1">
    <location>
        <position position="42"/>
    </location>
    <ligand>
        <name>substrate</name>
    </ligand>
</feature>
<feature type="binding site" evidence="1">
    <location>
        <position position="118"/>
    </location>
    <ligand>
        <name>ATP</name>
        <dbReference type="ChEBI" id="CHEBI:30616"/>
    </ligand>
</feature>
<feature type="binding site" evidence="1">
    <location>
        <position position="164"/>
    </location>
    <ligand>
        <name>ATP</name>
        <dbReference type="ChEBI" id="CHEBI:30616"/>
    </ligand>
</feature>
<feature type="binding site" evidence="1">
    <location>
        <position position="191"/>
    </location>
    <ligand>
        <name>substrate</name>
    </ligand>
</feature>
<sequence>MKNKNVIQKMREKTPLIHCITNYVTINDCANILLSFGASPAMCEAYDEVYDFVSISSALYINLGTLTKEQETAAVLASISAKNHNVPVVIDPVGCPAIKRKVEVINRIAEVGRIDIIKGNIGEIKFLAGMDSETRGVDSLDNGENALDACTQLAKKYNCIVAATGEKDFVSDGKRGSVIKNGTEMLTKVTGAGCMLGALCAATCANFEDKLVSTTAAILSMNIAGEKAYEEAQLPGSFRIALIDNIYMISDEEIWERGNVEWK</sequence>